<evidence type="ECO:0000250" key="1">
    <source>
        <dbReference type="UniProtKB" id="P48449"/>
    </source>
</evidence>
<evidence type="ECO:0000269" key="2">
    <source>
    </source>
</evidence>
<evidence type="ECO:0000269" key="3">
    <source>
    </source>
</evidence>
<evidence type="ECO:0000269" key="4">
    <source>
    </source>
</evidence>
<evidence type="ECO:0000303" key="5">
    <source>
    </source>
</evidence>
<evidence type="ECO:0000303" key="6">
    <source>
    </source>
</evidence>
<evidence type="ECO:0000303" key="7">
    <source ref="1"/>
</evidence>
<evidence type="ECO:0000305" key="8"/>
<evidence type="ECO:0000312" key="9">
    <source>
        <dbReference type="Araport" id="AT5G48010"/>
    </source>
</evidence>
<evidence type="ECO:0000312" key="10">
    <source>
        <dbReference type="EMBL" id="BAB11065.1"/>
    </source>
</evidence>
<dbReference type="EC" id="5.4.99.31" evidence="2"/>
<dbReference type="EMBL" id="AY327541">
    <property type="protein sequence ID" value="AAP92117.1"/>
    <property type="molecule type" value="mRNA"/>
</dbReference>
<dbReference type="EMBL" id="AB017064">
    <property type="protein sequence ID" value="BAB11065.1"/>
    <property type="status" value="ALT_SEQ"/>
    <property type="molecule type" value="Genomic_DNA"/>
</dbReference>
<dbReference type="EMBL" id="CP002688">
    <property type="protein sequence ID" value="AED95609.1"/>
    <property type="molecule type" value="Genomic_DNA"/>
</dbReference>
<dbReference type="EMBL" id="CP002688">
    <property type="protein sequence ID" value="AED95610.1"/>
    <property type="molecule type" value="Genomic_DNA"/>
</dbReference>
<dbReference type="EMBL" id="AK227776">
    <property type="protein sequence ID" value="BAE99758.1"/>
    <property type="molecule type" value="mRNA"/>
</dbReference>
<dbReference type="RefSeq" id="NP_001078733.1">
    <molecule id="Q9FI37-1"/>
    <property type="nucleotide sequence ID" value="NM_001085264.2"/>
</dbReference>
<dbReference type="RefSeq" id="NP_199612.3">
    <molecule id="Q9FI37-2"/>
    <property type="nucleotide sequence ID" value="NM_124175.4"/>
</dbReference>
<dbReference type="SMR" id="Q9FI37"/>
<dbReference type="FunCoup" id="Q9FI37">
    <property type="interactions" value="703"/>
</dbReference>
<dbReference type="STRING" id="3702.Q9FI37"/>
<dbReference type="PaxDb" id="3702-AT5G48010.2"/>
<dbReference type="ProteomicsDB" id="236681">
    <molecule id="Q9FI37-1"/>
</dbReference>
<dbReference type="EnsemblPlants" id="AT5G48010.1">
    <molecule id="Q9FI37-2"/>
    <property type="protein sequence ID" value="AT5G48010.1"/>
    <property type="gene ID" value="AT5G48010"/>
</dbReference>
<dbReference type="EnsemblPlants" id="AT5G48010.2">
    <molecule id="Q9FI37-1"/>
    <property type="protein sequence ID" value="AT5G48010.2"/>
    <property type="gene ID" value="AT5G48010"/>
</dbReference>
<dbReference type="GeneID" id="834852"/>
<dbReference type="Gramene" id="AT5G48010.1">
    <molecule id="Q9FI37-2"/>
    <property type="protein sequence ID" value="AT5G48010.1"/>
    <property type="gene ID" value="AT5G48010"/>
</dbReference>
<dbReference type="Gramene" id="AT5G48010.2">
    <molecule id="Q9FI37-1"/>
    <property type="protein sequence ID" value="AT5G48010.2"/>
    <property type="gene ID" value="AT5G48010"/>
</dbReference>
<dbReference type="KEGG" id="ath:AT5G48010"/>
<dbReference type="Araport" id="AT5G48010"/>
<dbReference type="TAIR" id="AT5G48010">
    <property type="gene designation" value="THAS1"/>
</dbReference>
<dbReference type="eggNOG" id="KOG0497">
    <property type="taxonomic scope" value="Eukaryota"/>
</dbReference>
<dbReference type="InParanoid" id="Q9FI37"/>
<dbReference type="OMA" id="GKAWLEW"/>
<dbReference type="PhylomeDB" id="Q9FI37"/>
<dbReference type="BRENDA" id="5.4.99.31">
    <property type="organism ID" value="399"/>
</dbReference>
<dbReference type="PRO" id="PR:Q9FI37"/>
<dbReference type="Proteomes" id="UP000006548">
    <property type="component" value="Chromosome 5"/>
</dbReference>
<dbReference type="ExpressionAtlas" id="Q9FI37">
    <property type="expression patterns" value="baseline and differential"/>
</dbReference>
<dbReference type="GO" id="GO:0005811">
    <property type="term" value="C:lipid droplet"/>
    <property type="evidence" value="ECO:0007669"/>
    <property type="project" value="InterPro"/>
</dbReference>
<dbReference type="GO" id="GO:0051746">
    <property type="term" value="F:thalianol synthase activity"/>
    <property type="evidence" value="ECO:0000314"/>
    <property type="project" value="TAIR"/>
</dbReference>
<dbReference type="GO" id="GO:0009629">
    <property type="term" value="P:response to gravity"/>
    <property type="evidence" value="ECO:0000270"/>
    <property type="project" value="UniProtKB"/>
</dbReference>
<dbReference type="GO" id="GO:0009416">
    <property type="term" value="P:response to light stimulus"/>
    <property type="evidence" value="ECO:0000270"/>
    <property type="project" value="UniProtKB"/>
</dbReference>
<dbReference type="GO" id="GO:0048364">
    <property type="term" value="P:root development"/>
    <property type="evidence" value="ECO:0000315"/>
    <property type="project" value="TAIR"/>
</dbReference>
<dbReference type="GO" id="GO:0080003">
    <property type="term" value="P:thalianol metabolic process"/>
    <property type="evidence" value="ECO:0000315"/>
    <property type="project" value="TAIR"/>
</dbReference>
<dbReference type="GO" id="GO:0010263">
    <property type="term" value="P:tricyclic triterpenoid biosynthetic process"/>
    <property type="evidence" value="ECO:0000314"/>
    <property type="project" value="TAIR"/>
</dbReference>
<dbReference type="CDD" id="cd02892">
    <property type="entry name" value="SQCY_1"/>
    <property type="match status" value="1"/>
</dbReference>
<dbReference type="FunFam" id="1.50.10.20:FF:000011">
    <property type="entry name" value="Terpene cyclase/mutase family member"/>
    <property type="match status" value="1"/>
</dbReference>
<dbReference type="Gene3D" id="1.50.10.20">
    <property type="match status" value="2"/>
</dbReference>
<dbReference type="InterPro" id="IPR032696">
    <property type="entry name" value="SQ_cyclase_C"/>
</dbReference>
<dbReference type="InterPro" id="IPR032697">
    <property type="entry name" value="SQ_cyclase_N"/>
</dbReference>
<dbReference type="InterPro" id="IPR018333">
    <property type="entry name" value="Squalene_cyclase"/>
</dbReference>
<dbReference type="InterPro" id="IPR002365">
    <property type="entry name" value="Terpene_synthase_CS"/>
</dbReference>
<dbReference type="InterPro" id="IPR008930">
    <property type="entry name" value="Terpenoid_cyclase/PrenylTrfase"/>
</dbReference>
<dbReference type="NCBIfam" id="TIGR01787">
    <property type="entry name" value="squalene_cyclas"/>
    <property type="match status" value="1"/>
</dbReference>
<dbReference type="PANTHER" id="PTHR11764:SF49">
    <property type="entry name" value="ARABIDIOL SYNTHASE-RELATED"/>
    <property type="match status" value="1"/>
</dbReference>
<dbReference type="PANTHER" id="PTHR11764">
    <property type="entry name" value="TERPENE CYCLASE/MUTASE FAMILY MEMBER"/>
    <property type="match status" value="1"/>
</dbReference>
<dbReference type="Pfam" id="PF13243">
    <property type="entry name" value="SQHop_cyclase_C"/>
    <property type="match status" value="1"/>
</dbReference>
<dbReference type="Pfam" id="PF13249">
    <property type="entry name" value="SQHop_cyclase_N"/>
    <property type="match status" value="1"/>
</dbReference>
<dbReference type="SFLD" id="SFLDG01016">
    <property type="entry name" value="Prenyltransferase_Like_2"/>
    <property type="match status" value="1"/>
</dbReference>
<dbReference type="SUPFAM" id="SSF48239">
    <property type="entry name" value="Terpenoid cyclases/Protein prenyltransferases"/>
    <property type="match status" value="2"/>
</dbReference>
<dbReference type="PROSITE" id="PS01074">
    <property type="entry name" value="TERPENE_SYNTHASES"/>
    <property type="match status" value="1"/>
</dbReference>
<accession>Q9FI37</accession>
<accession>Q0WSZ0</accession>
<accession>Q7XJ43</accession>
<sequence length="766" mass="88203">MWRLRTGPKAGEDTHLFTTNNYAGRQIWEFDANAGSPQEIAEVEDARHKFSDNTSRFKTTADLLWRMQFLREKKFEQKIPRVIIEDARKIKYEDAKTALKRGLLYFTALQADDGHWPAENSGPNFYTPPFLICLYITGHLEKIFTPEHVKELLRHIYNMQNEDGGWGLHVESHSVMFCTVINYVCLRIVGEEVGHDDQRNGCAKAHKWIMDHGGATYTPLIGKALLSVLGVYDWSGCNPIPPEFWLLPSSFPVNGGTLWIYLRDTFMGLSYLYGKKFVAPPTPLILQLREELYPEPYAKINWTQTRNRCGKEDLYYPRSFLQDLFWKSVHMFSESILDRWPLNKLIRQRALQSTMALIHYHDESTRYITGGCLPKAFHMLACWIEDPKSDYFKKHLARVREYIWIGEDGLKIQSFGSQLWDTALSLHALLDGIDDHDVDDEIKTTLVKGYDYLKKSQITENPRGDHFKMFRHKTKGGWTFSDQDQGWPVSDCTAESLECCLFFESMPSELIGKKMDVEKLYDAVDYLLYLQSDNGGIAAWQPVEGKAWLEWLSPVEFLEDTIVEYEYVECTGSAIAALTQFNKQFPGYKNVEVKRFITKAAKYIEDMQTVDGSWYGNWGVCFIYGTFFAVRGLVAAGKTYSNCEAIRKAVRFLLDTQNPEGGWGESFLSCPSKKYTPLKGNSTNVVQTAQALMVLIMGDQMERDPLPVHRAAQVLINSQLDNGDFPQQEIMGTFMRTVMLHFPTYRNTFSLWALTHYTHALRRLLP</sequence>
<feature type="chain" id="PRO_0000366139" description="Thalianol synthase 1">
    <location>
        <begin position="1"/>
        <end position="766"/>
    </location>
</feature>
<feature type="repeat" description="PFTB 1">
    <location>
        <begin position="149"/>
        <end position="190"/>
    </location>
</feature>
<feature type="repeat" description="PFTB 2">
    <location>
        <begin position="520"/>
        <end position="561"/>
    </location>
</feature>
<feature type="repeat" description="PFTB 3">
    <location>
        <begin position="646"/>
        <end position="687"/>
    </location>
</feature>
<feature type="active site" description="Proton donor" evidence="1">
    <location>
        <position position="491"/>
    </location>
</feature>
<feature type="splice variant" id="VSP_036570" description="In isoform 2." evidence="7">
    <original>WLSPVEFLEDTIVEYE</original>
    <variation>LLNIMIFR</variation>
    <location>
        <begin position="551"/>
        <end position="566"/>
    </location>
</feature>
<feature type="sequence conflict" description="In Ref. 4; BAE99758." evidence="8" ref="4">
    <original>H</original>
    <variation>R</variation>
    <location>
        <position position="15"/>
    </location>
</feature>
<feature type="sequence conflict" description="In Ref. 4; BAE99758." evidence="8" ref="4">
    <original>T</original>
    <variation>A</variation>
    <location>
        <position position="755"/>
    </location>
</feature>
<protein>
    <recommendedName>
        <fullName evidence="6">Thalianol synthase 1</fullName>
        <shortName evidence="6">AtTHAS1</shortName>
        <ecNumber evidence="2">5.4.99.31</ecNumber>
    </recommendedName>
    <alternativeName>
        <fullName evidence="6">Oxidosqualene cyclase</fullName>
    </alternativeName>
    <alternativeName>
        <fullName evidence="5">Pentacyclic triterpene synthase 4</fullName>
        <shortName evidence="5">AtPEN4</shortName>
    </alternativeName>
</protein>
<name>PEN4_ARATH</name>
<organism>
    <name type="scientific">Arabidopsis thaliana</name>
    <name type="common">Mouse-ear cress</name>
    <dbReference type="NCBI Taxonomy" id="3702"/>
    <lineage>
        <taxon>Eukaryota</taxon>
        <taxon>Viridiplantae</taxon>
        <taxon>Streptophyta</taxon>
        <taxon>Embryophyta</taxon>
        <taxon>Tracheophyta</taxon>
        <taxon>Spermatophyta</taxon>
        <taxon>Magnoliopsida</taxon>
        <taxon>eudicotyledons</taxon>
        <taxon>Gunneridae</taxon>
        <taxon>Pentapetalae</taxon>
        <taxon>rosids</taxon>
        <taxon>malvids</taxon>
        <taxon>Brassicales</taxon>
        <taxon>Brassicaceae</taxon>
        <taxon>Camelineae</taxon>
        <taxon>Arabidopsis</taxon>
    </lineage>
</organism>
<keyword id="KW-0025">Alternative splicing</keyword>
<keyword id="KW-0413">Isomerase</keyword>
<keyword id="KW-1185">Reference proteome</keyword>
<keyword id="KW-0677">Repeat</keyword>
<proteinExistence type="evidence at protein level"/>
<gene>
    <name evidence="6" type="primary">THAS1</name>
    <name evidence="6" type="synonym">OSC</name>
    <name evidence="5" type="synonym">PEN4</name>
    <name evidence="9" type="ordered locus">At5g48010</name>
    <name evidence="10" type="ORF">MDN11.9</name>
</gene>
<comment type="function">
    <text evidence="2 3">Converts oxidosqualene to thalianol.</text>
</comment>
<comment type="catalytic activity">
    <reaction evidence="2">
        <text>(S)-2,3-epoxysqualene = thalianol</text>
        <dbReference type="Rhea" id="RHEA:26160"/>
        <dbReference type="ChEBI" id="CHEBI:15441"/>
        <dbReference type="ChEBI" id="CHEBI:52317"/>
        <dbReference type="EC" id="5.4.99.31"/>
    </reaction>
</comment>
<comment type="alternative products">
    <event type="alternative splicing"/>
    <isoform>
        <id>Q9FI37-1</id>
        <name>1</name>
        <sequence type="displayed"/>
    </isoform>
    <isoform>
        <id>Q9FI37-2</id>
        <name>2</name>
        <sequence type="described" ref="VSP_036570"/>
    </isoform>
</comment>
<comment type="tissue specificity">
    <text evidence="3">Expressed primarily in the root epidermis.</text>
</comment>
<comment type="induction">
    <text evidence="4">Induced by gravity and light (PubMed:21252258). Transcriptional expression is repressed by CLB (PubMed:21252258).</text>
</comment>
<comment type="disruption phenotype">
    <text evidence="3">Loss of thalianol production in roots.</text>
</comment>
<comment type="miscellaneous">
    <text>Constitutes with three contiguous genes an operon-like gene cluster that is involved in the thalianol pathway.</text>
</comment>
<comment type="similarity">
    <text evidence="8">Belongs to the terpene cyclase/mutase family.</text>
</comment>
<comment type="sequence caution" evidence="8">
    <conflict type="erroneous gene model prediction">
        <sequence resource="EMBL-CDS" id="BAB11065"/>
    </conflict>
</comment>
<reference key="1">
    <citation type="submission" date="2003-06" db="EMBL/GenBank/DDBJ databases">
        <title>Triterpene synthases.</title>
        <authorList>
            <person name="Benveniste P."/>
            <person name="Nave P."/>
            <person name="Schaller H."/>
        </authorList>
    </citation>
    <scope>NUCLEOTIDE SEQUENCE [MRNA] (ISOFORM 2)</scope>
</reference>
<reference key="2">
    <citation type="journal article" date="1999" name="DNA Res.">
        <title>Structural analysis of Arabidopsis thaliana chromosome 5. IX. Sequence features of the regions of 1,011,550 bp covered by seventeen P1 and TAC clones.</title>
        <authorList>
            <person name="Kaneko T."/>
            <person name="Katoh T."/>
            <person name="Sato S."/>
            <person name="Nakamura Y."/>
            <person name="Asamizu E."/>
            <person name="Kotani H."/>
            <person name="Miyajima N."/>
            <person name="Tabata S."/>
        </authorList>
    </citation>
    <scope>NUCLEOTIDE SEQUENCE [LARGE SCALE GENOMIC DNA]</scope>
    <source>
        <strain>cv. Columbia</strain>
    </source>
</reference>
<reference key="3">
    <citation type="journal article" date="2017" name="Plant J.">
        <title>Araport11: a complete reannotation of the Arabidopsis thaliana reference genome.</title>
        <authorList>
            <person name="Cheng C.Y."/>
            <person name="Krishnakumar V."/>
            <person name="Chan A.P."/>
            <person name="Thibaud-Nissen F."/>
            <person name="Schobel S."/>
            <person name="Town C.D."/>
        </authorList>
    </citation>
    <scope>GENOME REANNOTATION</scope>
    <source>
        <strain>cv. Columbia</strain>
    </source>
</reference>
<reference key="4">
    <citation type="submission" date="2006-07" db="EMBL/GenBank/DDBJ databases">
        <title>Large-scale analysis of RIKEN Arabidopsis full-length (RAFL) cDNAs.</title>
        <authorList>
            <person name="Totoki Y."/>
            <person name="Seki M."/>
            <person name="Ishida J."/>
            <person name="Nakajima M."/>
            <person name="Enju A."/>
            <person name="Kamiya A."/>
            <person name="Narusaka M."/>
            <person name="Shin-i T."/>
            <person name="Nakagawa M."/>
            <person name="Sakamoto N."/>
            <person name="Oishi K."/>
            <person name="Kohara Y."/>
            <person name="Kobayashi M."/>
            <person name="Toyoda A."/>
            <person name="Sakaki Y."/>
            <person name="Sakurai T."/>
            <person name="Iida K."/>
            <person name="Akiyama K."/>
            <person name="Satou M."/>
            <person name="Toyoda T."/>
            <person name="Konagaya A."/>
            <person name="Carninci P."/>
            <person name="Kawai J."/>
            <person name="Hayashizaki Y."/>
            <person name="Shinozaki K."/>
        </authorList>
    </citation>
    <scope>NUCLEOTIDE SEQUENCE [LARGE SCALE MRNA] (ISOFORM 1)</scope>
    <source>
        <strain>cv. Columbia</strain>
    </source>
</reference>
<reference key="5">
    <citation type="journal article" date="2001" name="Plant Mol. Biol.">
        <title>Molecular cloning and expression in yeast of 2,3-oxidosqualene-triterpenoid cyclases from Arabidopsis thaliana.</title>
        <authorList>
            <person name="Husselstein-Muller T."/>
            <person name="Schaller H."/>
            <person name="Benveniste P."/>
        </authorList>
    </citation>
    <scope>IDENTIFICATION</scope>
    <scope>NOMENCLATURE</scope>
</reference>
<reference key="6">
    <citation type="journal article" date="2004" name="J. Am. Chem. Soc.">
        <title>Genome mining to identify new plant triterpenoids.</title>
        <authorList>
            <person name="Fazio G.C."/>
            <person name="Xu R."/>
            <person name="Matsuda S.P.T."/>
        </authorList>
    </citation>
    <scope>FUNCTION</scope>
    <scope>CATALYTIC ACTIVITY</scope>
</reference>
<reference key="7">
    <citation type="journal article" date="2008" name="Science">
        <title>Metabolic diversification -- independent assembly of operon-like gene clusters in different plants.</title>
        <authorList>
            <person name="Field B."/>
            <person name="Osbourn A.E."/>
        </authorList>
    </citation>
    <scope>FUNCTION</scope>
    <scope>TISSUE SPECIFICITY</scope>
    <scope>DISRUPTION PHENOTYPE</scope>
</reference>
<reference key="8">
    <citation type="journal article" date="2011" name="J. Exp. Bot.">
        <title>Arabidopsis thaliana calcium-dependent lipid-binding protein (AtCLB): a novel repressor of abiotic stress response.</title>
        <authorList>
            <person name="de Silva K."/>
            <person name="Laska B."/>
            <person name="Brown C."/>
            <person name="Sederoff H.W."/>
            <person name="Khodakovskaya M."/>
        </authorList>
    </citation>
    <scope>INDUCTION BY GRAVITY AND LIGHT</scope>
    <scope>REPRESSION BY CLB</scope>
    <source>
        <strain>cv. Columbia</strain>
    </source>
</reference>